<evidence type="ECO:0000255" key="1">
    <source>
        <dbReference type="HAMAP-Rule" id="MF_01865"/>
    </source>
</evidence>
<evidence type="ECO:0000255" key="2">
    <source>
        <dbReference type="PROSITE-ProRule" id="PRU01266"/>
    </source>
</evidence>
<evidence type="ECO:0000256" key="3">
    <source>
        <dbReference type="SAM" id="MobiDB-lite"/>
    </source>
</evidence>
<feature type="chain" id="PRO_0000374899" description="Ribosomal protein uS12 methylthiotransferase RimO">
    <location>
        <begin position="1"/>
        <end position="476"/>
    </location>
</feature>
<feature type="domain" description="MTTase N-terminal" evidence="1">
    <location>
        <begin position="7"/>
        <end position="123"/>
    </location>
</feature>
<feature type="domain" description="Radical SAM core" evidence="2">
    <location>
        <begin position="144"/>
        <end position="373"/>
    </location>
</feature>
<feature type="domain" description="TRAM" evidence="1">
    <location>
        <begin position="376"/>
        <end position="444"/>
    </location>
</feature>
<feature type="region of interest" description="Disordered" evidence="3">
    <location>
        <begin position="445"/>
        <end position="476"/>
    </location>
</feature>
<feature type="compositionally biased region" description="Basic and acidic residues" evidence="3">
    <location>
        <begin position="445"/>
        <end position="459"/>
    </location>
</feature>
<feature type="binding site" evidence="1">
    <location>
        <position position="16"/>
    </location>
    <ligand>
        <name>[4Fe-4S] cluster</name>
        <dbReference type="ChEBI" id="CHEBI:49883"/>
        <label>1</label>
    </ligand>
</feature>
<feature type="binding site" evidence="1">
    <location>
        <position position="52"/>
    </location>
    <ligand>
        <name>[4Fe-4S] cluster</name>
        <dbReference type="ChEBI" id="CHEBI:49883"/>
        <label>1</label>
    </ligand>
</feature>
<feature type="binding site" evidence="1">
    <location>
        <position position="86"/>
    </location>
    <ligand>
        <name>[4Fe-4S] cluster</name>
        <dbReference type="ChEBI" id="CHEBI:49883"/>
        <label>1</label>
    </ligand>
</feature>
<feature type="binding site" evidence="1">
    <location>
        <position position="158"/>
    </location>
    <ligand>
        <name>[4Fe-4S] cluster</name>
        <dbReference type="ChEBI" id="CHEBI:49883"/>
        <label>2</label>
        <note>4Fe-4S-S-AdoMet</note>
    </ligand>
</feature>
<feature type="binding site" evidence="1">
    <location>
        <position position="162"/>
    </location>
    <ligand>
        <name>[4Fe-4S] cluster</name>
        <dbReference type="ChEBI" id="CHEBI:49883"/>
        <label>2</label>
        <note>4Fe-4S-S-AdoMet</note>
    </ligand>
</feature>
<feature type="binding site" evidence="1">
    <location>
        <position position="165"/>
    </location>
    <ligand>
        <name>[4Fe-4S] cluster</name>
        <dbReference type="ChEBI" id="CHEBI:49883"/>
        <label>2</label>
        <note>4Fe-4S-S-AdoMet</note>
    </ligand>
</feature>
<dbReference type="EC" id="2.8.4.4" evidence="1"/>
<dbReference type="EMBL" id="CP000113">
    <property type="protein sequence ID" value="ABF89771.1"/>
    <property type="molecule type" value="Genomic_DNA"/>
</dbReference>
<dbReference type="RefSeq" id="WP_011551592.1">
    <property type="nucleotide sequence ID" value="NC_008095.1"/>
</dbReference>
<dbReference type="SMR" id="Q1DC90"/>
<dbReference type="STRING" id="246197.MXAN_1476"/>
<dbReference type="EnsemblBacteria" id="ABF89771">
    <property type="protein sequence ID" value="ABF89771"/>
    <property type="gene ID" value="MXAN_1476"/>
</dbReference>
<dbReference type="GeneID" id="41358922"/>
<dbReference type="KEGG" id="mxa:MXAN_1476"/>
<dbReference type="eggNOG" id="COG0621">
    <property type="taxonomic scope" value="Bacteria"/>
</dbReference>
<dbReference type="HOGENOM" id="CLU_018697_0_1_7"/>
<dbReference type="OrthoDB" id="9805215at2"/>
<dbReference type="Proteomes" id="UP000002402">
    <property type="component" value="Chromosome"/>
</dbReference>
<dbReference type="GO" id="GO:0005829">
    <property type="term" value="C:cytosol"/>
    <property type="evidence" value="ECO:0007669"/>
    <property type="project" value="TreeGrafter"/>
</dbReference>
<dbReference type="GO" id="GO:0051539">
    <property type="term" value="F:4 iron, 4 sulfur cluster binding"/>
    <property type="evidence" value="ECO:0007669"/>
    <property type="project" value="UniProtKB-UniRule"/>
</dbReference>
<dbReference type="GO" id="GO:0035599">
    <property type="term" value="F:aspartic acid methylthiotransferase activity"/>
    <property type="evidence" value="ECO:0007669"/>
    <property type="project" value="TreeGrafter"/>
</dbReference>
<dbReference type="GO" id="GO:0046872">
    <property type="term" value="F:metal ion binding"/>
    <property type="evidence" value="ECO:0007669"/>
    <property type="project" value="UniProtKB-KW"/>
</dbReference>
<dbReference type="GO" id="GO:0103039">
    <property type="term" value="F:protein methylthiotransferase activity"/>
    <property type="evidence" value="ECO:0007669"/>
    <property type="project" value="UniProtKB-EC"/>
</dbReference>
<dbReference type="GO" id="GO:0006400">
    <property type="term" value="P:tRNA modification"/>
    <property type="evidence" value="ECO:0007669"/>
    <property type="project" value="InterPro"/>
</dbReference>
<dbReference type="CDD" id="cd01335">
    <property type="entry name" value="Radical_SAM"/>
    <property type="match status" value="1"/>
</dbReference>
<dbReference type="FunFam" id="3.40.50.12160:FF:000003">
    <property type="entry name" value="CDK5 regulatory subunit-associated protein 1"/>
    <property type="match status" value="1"/>
</dbReference>
<dbReference type="FunFam" id="3.80.30.20:FF:000001">
    <property type="entry name" value="tRNA-2-methylthio-N(6)-dimethylallyladenosine synthase 2"/>
    <property type="match status" value="1"/>
</dbReference>
<dbReference type="Gene3D" id="3.40.50.12160">
    <property type="entry name" value="Methylthiotransferase, N-terminal domain"/>
    <property type="match status" value="1"/>
</dbReference>
<dbReference type="Gene3D" id="2.40.50.140">
    <property type="entry name" value="Nucleic acid-binding proteins"/>
    <property type="match status" value="1"/>
</dbReference>
<dbReference type="Gene3D" id="3.80.30.20">
    <property type="entry name" value="tm_1862 like domain"/>
    <property type="match status" value="1"/>
</dbReference>
<dbReference type="HAMAP" id="MF_01865">
    <property type="entry name" value="MTTase_RimO"/>
    <property type="match status" value="1"/>
</dbReference>
<dbReference type="InterPro" id="IPR006638">
    <property type="entry name" value="Elp3/MiaA/NifB-like_rSAM"/>
</dbReference>
<dbReference type="InterPro" id="IPR005839">
    <property type="entry name" value="Methylthiotransferase"/>
</dbReference>
<dbReference type="InterPro" id="IPR020612">
    <property type="entry name" value="Methylthiotransferase_CS"/>
</dbReference>
<dbReference type="InterPro" id="IPR013848">
    <property type="entry name" value="Methylthiotransferase_N"/>
</dbReference>
<dbReference type="InterPro" id="IPR038135">
    <property type="entry name" value="Methylthiotransferase_N_sf"/>
</dbReference>
<dbReference type="InterPro" id="IPR012340">
    <property type="entry name" value="NA-bd_OB-fold"/>
</dbReference>
<dbReference type="InterPro" id="IPR005840">
    <property type="entry name" value="Ribosomal_uS12_MeSTrfase_RimO"/>
</dbReference>
<dbReference type="InterPro" id="IPR007197">
    <property type="entry name" value="rSAM"/>
</dbReference>
<dbReference type="InterPro" id="IPR023404">
    <property type="entry name" value="rSAM_horseshoe"/>
</dbReference>
<dbReference type="InterPro" id="IPR002792">
    <property type="entry name" value="TRAM_dom"/>
</dbReference>
<dbReference type="NCBIfam" id="TIGR01125">
    <property type="entry name" value="30S ribosomal protein S12 methylthiotransferase RimO"/>
    <property type="match status" value="1"/>
</dbReference>
<dbReference type="NCBIfam" id="TIGR00089">
    <property type="entry name" value="MiaB/RimO family radical SAM methylthiotransferase"/>
    <property type="match status" value="1"/>
</dbReference>
<dbReference type="PANTHER" id="PTHR43837">
    <property type="entry name" value="RIBOSOMAL PROTEIN S12 METHYLTHIOTRANSFERASE RIMO"/>
    <property type="match status" value="1"/>
</dbReference>
<dbReference type="PANTHER" id="PTHR43837:SF1">
    <property type="entry name" value="RIBOSOMAL PROTEIN US12 METHYLTHIOTRANSFERASE RIMO"/>
    <property type="match status" value="1"/>
</dbReference>
<dbReference type="Pfam" id="PF04055">
    <property type="entry name" value="Radical_SAM"/>
    <property type="match status" value="1"/>
</dbReference>
<dbReference type="Pfam" id="PF18693">
    <property type="entry name" value="TRAM_2"/>
    <property type="match status" value="1"/>
</dbReference>
<dbReference type="Pfam" id="PF00919">
    <property type="entry name" value="UPF0004"/>
    <property type="match status" value="1"/>
</dbReference>
<dbReference type="SFLD" id="SFLDG01082">
    <property type="entry name" value="B12-binding_domain_containing"/>
    <property type="match status" value="1"/>
</dbReference>
<dbReference type="SFLD" id="SFLDS00029">
    <property type="entry name" value="Radical_SAM"/>
    <property type="match status" value="1"/>
</dbReference>
<dbReference type="SFLD" id="SFLDF00274">
    <property type="entry name" value="ribosomal_protein_S12_methylth"/>
    <property type="match status" value="1"/>
</dbReference>
<dbReference type="SMART" id="SM00729">
    <property type="entry name" value="Elp3"/>
    <property type="match status" value="1"/>
</dbReference>
<dbReference type="SUPFAM" id="SSF102114">
    <property type="entry name" value="Radical SAM enzymes"/>
    <property type="match status" value="1"/>
</dbReference>
<dbReference type="PROSITE" id="PS51449">
    <property type="entry name" value="MTTASE_N"/>
    <property type="match status" value="1"/>
</dbReference>
<dbReference type="PROSITE" id="PS01278">
    <property type="entry name" value="MTTASE_RADICAL"/>
    <property type="match status" value="1"/>
</dbReference>
<dbReference type="PROSITE" id="PS51918">
    <property type="entry name" value="RADICAL_SAM"/>
    <property type="match status" value="1"/>
</dbReference>
<dbReference type="PROSITE" id="PS50926">
    <property type="entry name" value="TRAM"/>
    <property type="match status" value="1"/>
</dbReference>
<reference key="1">
    <citation type="journal article" date="2006" name="Proc. Natl. Acad. Sci. U.S.A.">
        <title>Evolution of sensory complexity recorded in a myxobacterial genome.</title>
        <authorList>
            <person name="Goldman B.S."/>
            <person name="Nierman W.C."/>
            <person name="Kaiser D."/>
            <person name="Slater S.C."/>
            <person name="Durkin A.S."/>
            <person name="Eisen J.A."/>
            <person name="Ronning C.M."/>
            <person name="Barbazuk W.B."/>
            <person name="Blanchard M."/>
            <person name="Field C."/>
            <person name="Halling C."/>
            <person name="Hinkle G."/>
            <person name="Iartchuk O."/>
            <person name="Kim H.S."/>
            <person name="Mackenzie C."/>
            <person name="Madupu R."/>
            <person name="Miller N."/>
            <person name="Shvartsbeyn A."/>
            <person name="Sullivan S.A."/>
            <person name="Vaudin M."/>
            <person name="Wiegand R."/>
            <person name="Kaplan H.B."/>
        </authorList>
    </citation>
    <scope>NUCLEOTIDE SEQUENCE [LARGE SCALE GENOMIC DNA]</scope>
    <source>
        <strain>DK1622</strain>
    </source>
</reference>
<accession>Q1DC90</accession>
<organism>
    <name type="scientific">Myxococcus xanthus (strain DK1622)</name>
    <dbReference type="NCBI Taxonomy" id="246197"/>
    <lineage>
        <taxon>Bacteria</taxon>
        <taxon>Pseudomonadati</taxon>
        <taxon>Myxococcota</taxon>
        <taxon>Myxococcia</taxon>
        <taxon>Myxococcales</taxon>
        <taxon>Cystobacterineae</taxon>
        <taxon>Myxococcaceae</taxon>
        <taxon>Myxococcus</taxon>
    </lineage>
</organism>
<sequence>METTTPKSLYMMTLGCPKNRVDSEVMLGTLRHRGYTLVQEASDAQVIVVNTCAFIGPAKQESVDSILEMAELKKSGACKTLVVTGCLSQRYGEELSKEMPEVDHFLGTSAYAQIGDLLAAEASPRQVIPDPDYIHDANTPRINSMPKYTAYLKISEGCDNACAFCIIPTLRGGQRSRPIDDIVAEAKQLADSGVQELNLVAQDLTAYGHDLPGRPKLHDLLKALVQVDVKWIRLHYAYPRIFPDELIEVMASEPKIARYLDMPVQHVSDKLLLSMKRGRNSEFLKGLLTKLRERVPGLVMRTSLIVGLPGETEEDFEMLKEFVKTQRFERLGVFQYSDEEGTAAYDLPDKVPQKLIERRWREVMAIQKRINREQNKKLVGKRLEVLVEGPAPETEHLLVGRHQGQAPDIDGMVYINDGLAYPGEIVTVEVTEAHDYDLVARVVERPDPKQREHTARDAHPAPLPVAAMQRPAPRAE</sequence>
<proteinExistence type="inferred from homology"/>
<gene>
    <name evidence="1" type="primary">rimO</name>
    <name type="ordered locus">MXAN_1476</name>
</gene>
<keyword id="KW-0004">4Fe-4S</keyword>
<keyword id="KW-0963">Cytoplasm</keyword>
<keyword id="KW-0408">Iron</keyword>
<keyword id="KW-0411">Iron-sulfur</keyword>
<keyword id="KW-0479">Metal-binding</keyword>
<keyword id="KW-1185">Reference proteome</keyword>
<keyword id="KW-0949">S-adenosyl-L-methionine</keyword>
<keyword id="KW-0808">Transferase</keyword>
<protein>
    <recommendedName>
        <fullName evidence="1">Ribosomal protein uS12 methylthiotransferase RimO</fullName>
        <shortName evidence="1">uS12 MTTase</shortName>
        <shortName evidence="1">uS12 methylthiotransferase</shortName>
        <ecNumber evidence="1">2.8.4.4</ecNumber>
    </recommendedName>
    <alternativeName>
        <fullName evidence="1">Ribosomal protein uS12 (aspartate-C(3))-methylthiotransferase</fullName>
    </alternativeName>
    <alternativeName>
        <fullName evidence="1">Ribosome maturation factor RimO</fullName>
    </alternativeName>
</protein>
<comment type="function">
    <text evidence="1">Catalyzes the methylthiolation of an aspartic acid residue of ribosomal protein uS12.</text>
</comment>
<comment type="catalytic activity">
    <reaction evidence="1">
        <text>L-aspartate(89)-[ribosomal protein uS12]-hydrogen + (sulfur carrier)-SH + AH2 + 2 S-adenosyl-L-methionine = 3-methylsulfanyl-L-aspartate(89)-[ribosomal protein uS12]-hydrogen + (sulfur carrier)-H + 5'-deoxyadenosine + L-methionine + A + S-adenosyl-L-homocysteine + 2 H(+)</text>
        <dbReference type="Rhea" id="RHEA:37087"/>
        <dbReference type="Rhea" id="RHEA-COMP:10460"/>
        <dbReference type="Rhea" id="RHEA-COMP:10461"/>
        <dbReference type="Rhea" id="RHEA-COMP:14737"/>
        <dbReference type="Rhea" id="RHEA-COMP:14739"/>
        <dbReference type="ChEBI" id="CHEBI:13193"/>
        <dbReference type="ChEBI" id="CHEBI:15378"/>
        <dbReference type="ChEBI" id="CHEBI:17319"/>
        <dbReference type="ChEBI" id="CHEBI:17499"/>
        <dbReference type="ChEBI" id="CHEBI:29917"/>
        <dbReference type="ChEBI" id="CHEBI:29961"/>
        <dbReference type="ChEBI" id="CHEBI:57844"/>
        <dbReference type="ChEBI" id="CHEBI:57856"/>
        <dbReference type="ChEBI" id="CHEBI:59789"/>
        <dbReference type="ChEBI" id="CHEBI:64428"/>
        <dbReference type="ChEBI" id="CHEBI:73599"/>
        <dbReference type="EC" id="2.8.4.4"/>
    </reaction>
</comment>
<comment type="cofactor">
    <cofactor evidence="1">
        <name>[4Fe-4S] cluster</name>
        <dbReference type="ChEBI" id="CHEBI:49883"/>
    </cofactor>
    <text evidence="1">Binds 2 [4Fe-4S] clusters. One cluster is coordinated with 3 cysteines and an exchangeable S-adenosyl-L-methionine.</text>
</comment>
<comment type="subcellular location">
    <subcellularLocation>
        <location evidence="1">Cytoplasm</location>
    </subcellularLocation>
</comment>
<comment type="similarity">
    <text evidence="1">Belongs to the methylthiotransferase family. RimO subfamily.</text>
</comment>
<name>RIMO_MYXXD</name>